<dbReference type="EMBL" id="AE008917">
    <property type="protein sequence ID" value="AAL52467.1"/>
    <property type="molecule type" value="Genomic_DNA"/>
</dbReference>
<dbReference type="PIR" id="AH3412">
    <property type="entry name" value="AH3412"/>
</dbReference>
<dbReference type="RefSeq" id="WP_004683399.1">
    <property type="nucleotide sequence ID" value="NC_003317.1"/>
</dbReference>
<dbReference type="SMR" id="Q8YG75"/>
<dbReference type="GeneID" id="29594129"/>
<dbReference type="KEGG" id="bme:BMEI1286"/>
<dbReference type="KEGG" id="bmel:DK63_119"/>
<dbReference type="PATRIC" id="fig|224914.52.peg.124"/>
<dbReference type="eggNOG" id="COG1159">
    <property type="taxonomic scope" value="Bacteria"/>
</dbReference>
<dbReference type="PhylomeDB" id="Q8YG75"/>
<dbReference type="Proteomes" id="UP000000419">
    <property type="component" value="Chromosome I"/>
</dbReference>
<dbReference type="GO" id="GO:0005829">
    <property type="term" value="C:cytosol"/>
    <property type="evidence" value="ECO:0007669"/>
    <property type="project" value="TreeGrafter"/>
</dbReference>
<dbReference type="GO" id="GO:0005886">
    <property type="term" value="C:plasma membrane"/>
    <property type="evidence" value="ECO:0007669"/>
    <property type="project" value="UniProtKB-SubCell"/>
</dbReference>
<dbReference type="GO" id="GO:0005525">
    <property type="term" value="F:GTP binding"/>
    <property type="evidence" value="ECO:0007669"/>
    <property type="project" value="UniProtKB-UniRule"/>
</dbReference>
<dbReference type="GO" id="GO:0003924">
    <property type="term" value="F:GTPase activity"/>
    <property type="evidence" value="ECO:0007669"/>
    <property type="project" value="UniProtKB-UniRule"/>
</dbReference>
<dbReference type="GO" id="GO:0043024">
    <property type="term" value="F:ribosomal small subunit binding"/>
    <property type="evidence" value="ECO:0007669"/>
    <property type="project" value="TreeGrafter"/>
</dbReference>
<dbReference type="GO" id="GO:0070181">
    <property type="term" value="F:small ribosomal subunit rRNA binding"/>
    <property type="evidence" value="ECO:0007669"/>
    <property type="project" value="UniProtKB-UniRule"/>
</dbReference>
<dbReference type="GO" id="GO:0000028">
    <property type="term" value="P:ribosomal small subunit assembly"/>
    <property type="evidence" value="ECO:0007669"/>
    <property type="project" value="TreeGrafter"/>
</dbReference>
<dbReference type="CDD" id="cd04163">
    <property type="entry name" value="Era"/>
    <property type="match status" value="1"/>
</dbReference>
<dbReference type="CDD" id="cd22534">
    <property type="entry name" value="KH-II_Era"/>
    <property type="match status" value="1"/>
</dbReference>
<dbReference type="FunFam" id="3.30.300.20:FF:000031">
    <property type="entry name" value="GTPase Era"/>
    <property type="match status" value="1"/>
</dbReference>
<dbReference type="Gene3D" id="3.30.300.20">
    <property type="match status" value="1"/>
</dbReference>
<dbReference type="Gene3D" id="3.40.50.300">
    <property type="entry name" value="P-loop containing nucleotide triphosphate hydrolases"/>
    <property type="match status" value="1"/>
</dbReference>
<dbReference type="HAMAP" id="MF_00367">
    <property type="entry name" value="GTPase_Era"/>
    <property type="match status" value="1"/>
</dbReference>
<dbReference type="InterPro" id="IPR030388">
    <property type="entry name" value="G_ERA_dom"/>
</dbReference>
<dbReference type="InterPro" id="IPR006073">
    <property type="entry name" value="GTP-bd"/>
</dbReference>
<dbReference type="InterPro" id="IPR005662">
    <property type="entry name" value="GTPase_Era-like"/>
</dbReference>
<dbReference type="InterPro" id="IPR015946">
    <property type="entry name" value="KH_dom-like_a/b"/>
</dbReference>
<dbReference type="InterPro" id="IPR004044">
    <property type="entry name" value="KH_dom_type_2"/>
</dbReference>
<dbReference type="InterPro" id="IPR009019">
    <property type="entry name" value="KH_sf_prok-type"/>
</dbReference>
<dbReference type="InterPro" id="IPR027417">
    <property type="entry name" value="P-loop_NTPase"/>
</dbReference>
<dbReference type="InterPro" id="IPR005225">
    <property type="entry name" value="Small_GTP-bd"/>
</dbReference>
<dbReference type="NCBIfam" id="TIGR00436">
    <property type="entry name" value="era"/>
    <property type="match status" value="1"/>
</dbReference>
<dbReference type="NCBIfam" id="NF000908">
    <property type="entry name" value="PRK00089.1"/>
    <property type="match status" value="1"/>
</dbReference>
<dbReference type="NCBIfam" id="TIGR00231">
    <property type="entry name" value="small_GTP"/>
    <property type="match status" value="1"/>
</dbReference>
<dbReference type="PANTHER" id="PTHR42698">
    <property type="entry name" value="GTPASE ERA"/>
    <property type="match status" value="1"/>
</dbReference>
<dbReference type="PANTHER" id="PTHR42698:SF1">
    <property type="entry name" value="GTPASE ERA, MITOCHONDRIAL"/>
    <property type="match status" value="1"/>
</dbReference>
<dbReference type="Pfam" id="PF07650">
    <property type="entry name" value="KH_2"/>
    <property type="match status" value="1"/>
</dbReference>
<dbReference type="Pfam" id="PF01926">
    <property type="entry name" value="MMR_HSR1"/>
    <property type="match status" value="1"/>
</dbReference>
<dbReference type="SUPFAM" id="SSF52540">
    <property type="entry name" value="P-loop containing nucleoside triphosphate hydrolases"/>
    <property type="match status" value="1"/>
</dbReference>
<dbReference type="SUPFAM" id="SSF54814">
    <property type="entry name" value="Prokaryotic type KH domain (KH-domain type II)"/>
    <property type="match status" value="1"/>
</dbReference>
<dbReference type="PROSITE" id="PS51713">
    <property type="entry name" value="G_ERA"/>
    <property type="match status" value="1"/>
</dbReference>
<dbReference type="PROSITE" id="PS50823">
    <property type="entry name" value="KH_TYPE_2"/>
    <property type="match status" value="1"/>
</dbReference>
<accession>Q8YG75</accession>
<evidence type="ECO:0000255" key="1">
    <source>
        <dbReference type="HAMAP-Rule" id="MF_00367"/>
    </source>
</evidence>
<evidence type="ECO:0000255" key="2">
    <source>
        <dbReference type="PROSITE-ProRule" id="PRU01050"/>
    </source>
</evidence>
<protein>
    <recommendedName>
        <fullName evidence="1">GTPase Era</fullName>
    </recommendedName>
</protein>
<keyword id="KW-0997">Cell inner membrane</keyword>
<keyword id="KW-1003">Cell membrane</keyword>
<keyword id="KW-0963">Cytoplasm</keyword>
<keyword id="KW-0342">GTP-binding</keyword>
<keyword id="KW-0472">Membrane</keyword>
<keyword id="KW-0547">Nucleotide-binding</keyword>
<keyword id="KW-0690">Ribosome biogenesis</keyword>
<keyword id="KW-0694">RNA-binding</keyword>
<keyword id="KW-0699">rRNA-binding</keyword>
<feature type="chain" id="PRO_0000180000" description="GTPase Era">
    <location>
        <begin position="1"/>
        <end position="311"/>
    </location>
</feature>
<feature type="domain" description="Era-type G" evidence="2">
    <location>
        <begin position="18"/>
        <end position="185"/>
    </location>
</feature>
<feature type="domain" description="KH type-2" evidence="1">
    <location>
        <begin position="216"/>
        <end position="293"/>
    </location>
</feature>
<feature type="region of interest" description="G1" evidence="2">
    <location>
        <begin position="26"/>
        <end position="33"/>
    </location>
</feature>
<feature type="region of interest" description="G2" evidence="2">
    <location>
        <begin position="52"/>
        <end position="56"/>
    </location>
</feature>
<feature type="region of interest" description="G3" evidence="2">
    <location>
        <begin position="73"/>
        <end position="76"/>
    </location>
</feature>
<feature type="region of interest" description="G4" evidence="2">
    <location>
        <begin position="135"/>
        <end position="138"/>
    </location>
</feature>
<feature type="region of interest" description="G5" evidence="2">
    <location>
        <begin position="164"/>
        <end position="166"/>
    </location>
</feature>
<feature type="binding site" evidence="1">
    <location>
        <begin position="26"/>
        <end position="33"/>
    </location>
    <ligand>
        <name>GTP</name>
        <dbReference type="ChEBI" id="CHEBI:37565"/>
    </ligand>
</feature>
<feature type="binding site" evidence="1">
    <location>
        <begin position="73"/>
        <end position="77"/>
    </location>
    <ligand>
        <name>GTP</name>
        <dbReference type="ChEBI" id="CHEBI:37565"/>
    </ligand>
</feature>
<feature type="binding site" evidence="1">
    <location>
        <begin position="135"/>
        <end position="138"/>
    </location>
    <ligand>
        <name>GTP</name>
        <dbReference type="ChEBI" id="CHEBI:37565"/>
    </ligand>
</feature>
<comment type="function">
    <text evidence="1">An essential GTPase that binds both GDP and GTP, with rapid nucleotide exchange. Plays a role in 16S rRNA processing and 30S ribosomal subunit biogenesis and possibly also in cell cycle regulation and energy metabolism.</text>
</comment>
<comment type="subunit">
    <text evidence="1">Monomer.</text>
</comment>
<comment type="subcellular location">
    <subcellularLocation>
        <location>Cytoplasm</location>
    </subcellularLocation>
    <subcellularLocation>
        <location evidence="1">Cell inner membrane</location>
        <topology evidence="1">Peripheral membrane protein</topology>
    </subcellularLocation>
</comment>
<comment type="similarity">
    <text evidence="1 2">Belongs to the TRAFAC class TrmE-Era-EngA-EngB-Septin-like GTPase superfamily. Era GTPase family.</text>
</comment>
<reference key="1">
    <citation type="journal article" date="2002" name="Proc. Natl. Acad. Sci. U.S.A.">
        <title>The genome sequence of the facultative intracellular pathogen Brucella melitensis.</title>
        <authorList>
            <person name="DelVecchio V.G."/>
            <person name="Kapatral V."/>
            <person name="Redkar R.J."/>
            <person name="Patra G."/>
            <person name="Mujer C."/>
            <person name="Los T."/>
            <person name="Ivanova N."/>
            <person name="Anderson I."/>
            <person name="Bhattacharyya A."/>
            <person name="Lykidis A."/>
            <person name="Reznik G."/>
            <person name="Jablonski L."/>
            <person name="Larsen N."/>
            <person name="D'Souza M."/>
            <person name="Bernal A."/>
            <person name="Mazur M."/>
            <person name="Goltsman E."/>
            <person name="Selkov E."/>
            <person name="Elzer P.H."/>
            <person name="Hagius S."/>
            <person name="O'Callaghan D."/>
            <person name="Letesson J.-J."/>
            <person name="Haselkorn R."/>
            <person name="Kyrpides N.C."/>
            <person name="Overbeek R."/>
        </authorList>
    </citation>
    <scope>NUCLEOTIDE SEQUENCE [LARGE SCALE GENOMIC DNA]</scope>
    <source>
        <strain>ATCC 23456 / CCUG 17765 / NCTC 10094 / 16M</strain>
    </source>
</reference>
<proteinExistence type="inferred from homology"/>
<gene>
    <name evidence="1" type="primary">era</name>
    <name type="ordered locus">BMEI1286</name>
</gene>
<name>ERA_BRUME</name>
<sequence>MNNGTSPAGGETEATQTRSGFVALIGAPNAGKSTLVNQLVGTKVSIVTHKVQTTRALVRGIFIEGPAQIVLVDTPGIFRPKRRLDRAMVTTAWGGAKDADIILVIIDAQGGFNENAEALLESMKDVRQKKVLVLNKVDRVDPPVLLSLAQKANGLVPFDRTFMISALNGSGCKDLAKYLAESVPNGPWYYPEDQISDMPMRQLAAEITREKLYLRLHEELPYASTVETERWEERKDGSVRIEQVIYVERESQKKIVLGHKGETVKAIGQAARKEISEILEQTVHQFLFVKVRENWGNDPERYREMGLDFPT</sequence>
<organism>
    <name type="scientific">Brucella melitensis biotype 1 (strain ATCC 23456 / CCUG 17765 / NCTC 10094 / 16M)</name>
    <dbReference type="NCBI Taxonomy" id="224914"/>
    <lineage>
        <taxon>Bacteria</taxon>
        <taxon>Pseudomonadati</taxon>
        <taxon>Pseudomonadota</taxon>
        <taxon>Alphaproteobacteria</taxon>
        <taxon>Hyphomicrobiales</taxon>
        <taxon>Brucellaceae</taxon>
        <taxon>Brucella/Ochrobactrum group</taxon>
        <taxon>Brucella</taxon>
    </lineage>
</organism>